<protein>
    <recommendedName>
        <fullName evidence="2">Conotoxin reg3d</fullName>
    </recommendedName>
</protein>
<comment type="subcellular location">
    <subcellularLocation>
        <location evidence="1">Secreted</location>
    </subcellularLocation>
</comment>
<comment type="tissue specificity">
    <text evidence="4">Expressed by the venom duct.</text>
</comment>
<comment type="domain">
    <text evidence="3">The cysteine framework is III (CC-C-C-CC). Classified in the M-3 branch, since 3 residues stand between the fourth and the fifth cysteine residues.</text>
</comment>
<comment type="PTM">
    <text evidence="1">Contains 3 disulfide bonds.</text>
</comment>
<comment type="mass spectrometry"/>
<comment type="similarity">
    <text evidence="3">Belongs to the conotoxin M superfamily.</text>
</comment>
<sequence>LCCPPQXCGPDCASPCC</sequence>
<keyword id="KW-0903">Direct protein sequencing</keyword>
<keyword id="KW-1015">Disulfide bond</keyword>
<keyword id="KW-0379">Hydroxylation</keyword>
<keyword id="KW-0964">Secreted</keyword>
<keyword id="KW-0800">Toxin</keyword>
<organism>
    <name type="scientific">Conus regius</name>
    <name type="common">Crown cone</name>
    <dbReference type="NCBI Taxonomy" id="101314"/>
    <lineage>
        <taxon>Eukaryota</taxon>
        <taxon>Metazoa</taxon>
        <taxon>Spiralia</taxon>
        <taxon>Lophotrochozoa</taxon>
        <taxon>Mollusca</taxon>
        <taxon>Gastropoda</taxon>
        <taxon>Caenogastropoda</taxon>
        <taxon>Neogastropoda</taxon>
        <taxon>Conoidea</taxon>
        <taxon>Conidae</taxon>
        <taxon>Conus</taxon>
        <taxon>Stephanoconus</taxon>
    </lineage>
</organism>
<feature type="peptide" id="PRO_0000444760" description="Conotoxin reg3d" evidence="1">
    <location>
        <begin position="1"/>
        <end position="17"/>
    </location>
</feature>
<feature type="modified residue" description="4-hydroxyproline" evidence="1">
    <location>
        <position position="4"/>
    </location>
</feature>
<feature type="modified residue" description="4-hydroxyproline" evidence="1">
    <location>
        <position position="5"/>
    </location>
</feature>
<feature type="modified residue" description="4-hydroxyproline" evidence="1">
    <location>
        <position position="10"/>
    </location>
</feature>
<feature type="modified residue" description="4-hydroxyproline" evidence="1">
    <location>
        <position position="15"/>
    </location>
</feature>
<evidence type="ECO:0000269" key="1">
    <source>
    </source>
</evidence>
<evidence type="ECO:0000303" key="2">
    <source>
    </source>
</evidence>
<evidence type="ECO:0000305" key="3"/>
<evidence type="ECO:0000305" key="4">
    <source>
    </source>
</evidence>
<proteinExistence type="evidence at protein level"/>
<dbReference type="GO" id="GO:0005576">
    <property type="term" value="C:extracellular region"/>
    <property type="evidence" value="ECO:0007669"/>
    <property type="project" value="UniProtKB-SubCell"/>
</dbReference>
<dbReference type="GO" id="GO:0090729">
    <property type="term" value="F:toxin activity"/>
    <property type="evidence" value="ECO:0007669"/>
    <property type="project" value="UniProtKB-KW"/>
</dbReference>
<reference key="1">
    <citation type="journal article" date="2017" name="FEBS J.">
        <title>Structural plasticity of Mini-M conotoxins: expression of all mini-M subtypes by Conus regius.</title>
        <authorList>
            <person name="Franco A."/>
            <person name="Dovell S."/>
            <person name="Moller C."/>
            <person name="Grandal M."/>
            <person name="Clark E."/>
            <person name="Mari F."/>
        </authorList>
    </citation>
    <scope>PROTEIN SEQUENCE</scope>
    <scope>MASS SPECTROMETRY</scope>
    <scope>SUBCELLULAR LOCATION</scope>
    <scope>HYDROXYLATION AT PRO-4; PRO-5; PRO-10 AND PRO-15</scope>
    <source>
        <tissue>Venom</tissue>
    </source>
</reference>
<accession>P0DPJ3</accession>
<name>CM3D_CONRE</name>